<name>PP111_ARATH</name>
<proteinExistence type="inferred from homology"/>
<accession>Q9C507</accession>
<evidence type="ECO:0000255" key="1"/>
<evidence type="ECO:0000305" key="2"/>
<reference key="1">
    <citation type="journal article" date="2000" name="Nature">
        <title>Sequence and analysis of chromosome 1 of the plant Arabidopsis thaliana.</title>
        <authorList>
            <person name="Theologis A."/>
            <person name="Ecker J.R."/>
            <person name="Palm C.J."/>
            <person name="Federspiel N.A."/>
            <person name="Kaul S."/>
            <person name="White O."/>
            <person name="Alonso J."/>
            <person name="Altafi H."/>
            <person name="Araujo R."/>
            <person name="Bowman C.L."/>
            <person name="Brooks S.Y."/>
            <person name="Buehler E."/>
            <person name="Chan A."/>
            <person name="Chao Q."/>
            <person name="Chen H."/>
            <person name="Cheuk R.F."/>
            <person name="Chin C.W."/>
            <person name="Chung M.K."/>
            <person name="Conn L."/>
            <person name="Conway A.B."/>
            <person name="Conway A.R."/>
            <person name="Creasy T.H."/>
            <person name="Dewar K."/>
            <person name="Dunn P."/>
            <person name="Etgu P."/>
            <person name="Feldblyum T.V."/>
            <person name="Feng J.-D."/>
            <person name="Fong B."/>
            <person name="Fujii C.Y."/>
            <person name="Gill J.E."/>
            <person name="Goldsmith A.D."/>
            <person name="Haas B."/>
            <person name="Hansen N.F."/>
            <person name="Hughes B."/>
            <person name="Huizar L."/>
            <person name="Hunter J.L."/>
            <person name="Jenkins J."/>
            <person name="Johnson-Hopson C."/>
            <person name="Khan S."/>
            <person name="Khaykin E."/>
            <person name="Kim C.J."/>
            <person name="Koo H.L."/>
            <person name="Kremenetskaia I."/>
            <person name="Kurtz D.B."/>
            <person name="Kwan A."/>
            <person name="Lam B."/>
            <person name="Langin-Hooper S."/>
            <person name="Lee A."/>
            <person name="Lee J.M."/>
            <person name="Lenz C.A."/>
            <person name="Li J.H."/>
            <person name="Li Y.-P."/>
            <person name="Lin X."/>
            <person name="Liu S.X."/>
            <person name="Liu Z.A."/>
            <person name="Luros J.S."/>
            <person name="Maiti R."/>
            <person name="Marziali A."/>
            <person name="Militscher J."/>
            <person name="Miranda M."/>
            <person name="Nguyen M."/>
            <person name="Nierman W.C."/>
            <person name="Osborne B.I."/>
            <person name="Pai G."/>
            <person name="Peterson J."/>
            <person name="Pham P.K."/>
            <person name="Rizzo M."/>
            <person name="Rooney T."/>
            <person name="Rowley D."/>
            <person name="Sakano H."/>
            <person name="Salzberg S.L."/>
            <person name="Schwartz J.R."/>
            <person name="Shinn P."/>
            <person name="Southwick A.M."/>
            <person name="Sun H."/>
            <person name="Tallon L.J."/>
            <person name="Tambunga G."/>
            <person name="Toriumi M.J."/>
            <person name="Town C.D."/>
            <person name="Utterback T."/>
            <person name="Van Aken S."/>
            <person name="Vaysberg M."/>
            <person name="Vysotskaia V.S."/>
            <person name="Walker M."/>
            <person name="Wu D."/>
            <person name="Yu G."/>
            <person name="Fraser C.M."/>
            <person name="Venter J.C."/>
            <person name="Davis R.W."/>
        </authorList>
    </citation>
    <scope>NUCLEOTIDE SEQUENCE [LARGE SCALE GENOMIC DNA]</scope>
    <source>
        <strain>cv. Columbia</strain>
    </source>
</reference>
<reference key="2">
    <citation type="journal article" date="2017" name="Plant J.">
        <title>Araport11: a complete reannotation of the Arabidopsis thaliana reference genome.</title>
        <authorList>
            <person name="Cheng C.Y."/>
            <person name="Krishnakumar V."/>
            <person name="Chan A.P."/>
            <person name="Thibaud-Nissen F."/>
            <person name="Schobel S."/>
            <person name="Town C.D."/>
        </authorList>
    </citation>
    <scope>GENOME REANNOTATION</scope>
    <source>
        <strain>cv. Columbia</strain>
    </source>
</reference>
<reference key="3">
    <citation type="journal article" date="2004" name="Plant Cell">
        <title>Genome-wide analysis of Arabidopsis pentatricopeptide repeat proteins reveals their essential role in organelle biogenesis.</title>
        <authorList>
            <person name="Lurin C."/>
            <person name="Andres C."/>
            <person name="Aubourg S."/>
            <person name="Bellaoui M."/>
            <person name="Bitton F."/>
            <person name="Bruyere C."/>
            <person name="Caboche M."/>
            <person name="Debast C."/>
            <person name="Gualberto J."/>
            <person name="Hoffmann B."/>
            <person name="Lecharny A."/>
            <person name="Le Ret M."/>
            <person name="Martin-Magniette M.-L."/>
            <person name="Mireau H."/>
            <person name="Peeters N."/>
            <person name="Renou J.-P."/>
            <person name="Szurek B."/>
            <person name="Taconnat L."/>
            <person name="Small I."/>
        </authorList>
    </citation>
    <scope>GENE FAMILY</scope>
</reference>
<keyword id="KW-0496">Mitochondrion</keyword>
<keyword id="KW-1185">Reference proteome</keyword>
<keyword id="KW-0677">Repeat</keyword>
<keyword id="KW-0809">Transit peptide</keyword>
<gene>
    <name type="primary">PCMP-E66</name>
    <name type="ordered locus">At1g69350</name>
    <name type="ORF">F10D13.4</name>
    <name type="ORF">F23O10.7</name>
</gene>
<sequence length="787" mass="87490">MTQYMPLFRSCSSLRLVSQLHAHLLVTGRLRRDPLPVTKLIESYAFMGSPDSSRLVFEAFPYPDSFMYGVLIKCNVWCHLLDAAIDLYHRLVSETTQISKFVFPSVLRACAGSREHLSVGGKVHGRIIKGGVDDDAVIETSLLCMYGQTGNLSDAEKVFDGMPVRDLVAWSTLVSSCLENGEVVKALRMFKCMVDDGVEPDAVTMISVVEGCAELGCLRIARSVHGQITRKMFDLDETLCNSLLTMYSKCGDLLSSERIFEKIAKKNAVSWTAMISSYNRGEFSEKALRSFSEMIKSGIEPNLVTLYSVLSSCGLIGLIREGKSVHGFAVRRELDPNYESLSLALVELYAECGKLSDCETVLRVVSDRNIVAWNSLISLYAHRGMVIQALGLFRQMVTQRIKPDAFTLASSISACENAGLVPLGKQIHGHVIRTDVSDEFVQNSLIDMYSKSGSVDSASTVFNQIKHRSVVTWNSMLCGFSQNGNSVEAISLFDYMYHSYLEMNEVTFLAVIQACSSIGSLEKGKWVHHKLIISGLKDLFTDTALIDMYAKCGDLNAAETVFRAMSSRSIVSWSSMINAYGMHGRIGSAISTFNQMVESGTKPNEVVFMNVLSACGHSGSVEEGKYYFNLMKSFGVSPNSEHFACFIDLLSRSGDLKEAYRTIKEMPFLADASVWGSLVNGCRIHQKMDIIKAIKNDLSDIVTDDTGYYTLLSNIYAEEGEWEEFRRLRSAMKSSNLKKVPGYSAIEIDQKVFRFGAGEENRIQTDEIYRFLGNLQNLTNEEHVVDS</sequence>
<organism>
    <name type="scientific">Arabidopsis thaliana</name>
    <name type="common">Mouse-ear cress</name>
    <dbReference type="NCBI Taxonomy" id="3702"/>
    <lineage>
        <taxon>Eukaryota</taxon>
        <taxon>Viridiplantae</taxon>
        <taxon>Streptophyta</taxon>
        <taxon>Embryophyta</taxon>
        <taxon>Tracheophyta</taxon>
        <taxon>Spermatophyta</taxon>
        <taxon>Magnoliopsida</taxon>
        <taxon>eudicotyledons</taxon>
        <taxon>Gunneridae</taxon>
        <taxon>Pentapetalae</taxon>
        <taxon>rosids</taxon>
        <taxon>malvids</taxon>
        <taxon>Brassicales</taxon>
        <taxon>Brassicaceae</taxon>
        <taxon>Camelineae</taxon>
        <taxon>Arabidopsis</taxon>
    </lineage>
</organism>
<comment type="subcellular location">
    <subcellularLocation>
        <location evidence="2">Mitochondrion</location>
    </subcellularLocation>
</comment>
<comment type="similarity">
    <text evidence="2">Belongs to the PPR family. PCMP-E subfamily.</text>
</comment>
<comment type="online information" name="Pentatricopeptide repeat proteins">
    <link uri="https://ppr.plantenergy.uwa.edu.au"/>
</comment>
<dbReference type="EMBL" id="AC018364">
    <property type="protein sequence ID" value="AAG52503.1"/>
    <property type="molecule type" value="Genomic_DNA"/>
</dbReference>
<dbReference type="EMBL" id="AC073178">
    <property type="protein sequence ID" value="AAG60097.1"/>
    <property type="molecule type" value="Genomic_DNA"/>
</dbReference>
<dbReference type="EMBL" id="CP002684">
    <property type="protein sequence ID" value="AEE34914.1"/>
    <property type="molecule type" value="Genomic_DNA"/>
</dbReference>
<dbReference type="RefSeq" id="NP_564961.1">
    <property type="nucleotide sequence ID" value="NM_105602.3"/>
</dbReference>
<dbReference type="SMR" id="Q9C507"/>
<dbReference type="FunCoup" id="Q9C507">
    <property type="interactions" value="10"/>
</dbReference>
<dbReference type="PaxDb" id="3702-AT1G69350.1"/>
<dbReference type="ProteomicsDB" id="250488"/>
<dbReference type="EnsemblPlants" id="AT1G69350.1">
    <property type="protein sequence ID" value="AT1G69350.1"/>
    <property type="gene ID" value="AT1G69350"/>
</dbReference>
<dbReference type="GeneID" id="843267"/>
<dbReference type="Gramene" id="AT1G69350.1">
    <property type="protein sequence ID" value="AT1G69350.1"/>
    <property type="gene ID" value="AT1G69350"/>
</dbReference>
<dbReference type="KEGG" id="ath:AT1G69350"/>
<dbReference type="Araport" id="AT1G69350"/>
<dbReference type="TAIR" id="AT1G69350"/>
<dbReference type="eggNOG" id="KOG4197">
    <property type="taxonomic scope" value="Eukaryota"/>
</dbReference>
<dbReference type="HOGENOM" id="CLU_002706_15_10_1"/>
<dbReference type="InParanoid" id="Q9C507"/>
<dbReference type="OMA" id="GGNWYES"/>
<dbReference type="OrthoDB" id="185373at2759"/>
<dbReference type="PhylomeDB" id="Q9C507"/>
<dbReference type="PRO" id="PR:Q9C507"/>
<dbReference type="Proteomes" id="UP000006548">
    <property type="component" value="Chromosome 1"/>
</dbReference>
<dbReference type="ExpressionAtlas" id="Q9C507">
    <property type="expression patterns" value="baseline and differential"/>
</dbReference>
<dbReference type="GO" id="GO:0005739">
    <property type="term" value="C:mitochondrion"/>
    <property type="evidence" value="ECO:0007669"/>
    <property type="project" value="UniProtKB-SubCell"/>
</dbReference>
<dbReference type="GO" id="GO:0003723">
    <property type="term" value="F:RNA binding"/>
    <property type="evidence" value="ECO:0007669"/>
    <property type="project" value="InterPro"/>
</dbReference>
<dbReference type="GO" id="GO:0009451">
    <property type="term" value="P:RNA modification"/>
    <property type="evidence" value="ECO:0007669"/>
    <property type="project" value="InterPro"/>
</dbReference>
<dbReference type="FunFam" id="1.25.40.10:FF:000284">
    <property type="entry name" value="Pentatricopeptide repeat-containing protein"/>
    <property type="match status" value="1"/>
</dbReference>
<dbReference type="FunFam" id="1.25.40.10:FF:000212">
    <property type="entry name" value="Pentatricopeptide repeat-containing protein At2g03380, mitochondrial"/>
    <property type="match status" value="1"/>
</dbReference>
<dbReference type="FunFam" id="1.25.40.10:FF:000436">
    <property type="entry name" value="Pentatricopeptide repeat-containing protein At5g39350 family"/>
    <property type="match status" value="1"/>
</dbReference>
<dbReference type="FunFam" id="1.25.40.10:FF:001535">
    <property type="entry name" value="Putative pentatricopeptide repeat-containing protein, mitochondrial"/>
    <property type="match status" value="1"/>
</dbReference>
<dbReference type="Gene3D" id="1.25.40.10">
    <property type="entry name" value="Tetratricopeptide repeat domain"/>
    <property type="match status" value="6"/>
</dbReference>
<dbReference type="InterPro" id="IPR046848">
    <property type="entry name" value="E_motif"/>
</dbReference>
<dbReference type="InterPro" id="IPR002885">
    <property type="entry name" value="Pentatricopeptide_rpt"/>
</dbReference>
<dbReference type="InterPro" id="IPR046960">
    <property type="entry name" value="PPR_At4g14850-like_plant"/>
</dbReference>
<dbReference type="InterPro" id="IPR011990">
    <property type="entry name" value="TPR-like_helical_dom_sf"/>
</dbReference>
<dbReference type="NCBIfam" id="TIGR00756">
    <property type="entry name" value="PPR"/>
    <property type="match status" value="8"/>
</dbReference>
<dbReference type="PANTHER" id="PTHR24015:SF1693">
    <property type="entry name" value="DYW DOMAIN-CONTAINING PROTEIN"/>
    <property type="match status" value="1"/>
</dbReference>
<dbReference type="PANTHER" id="PTHR24015">
    <property type="entry name" value="OS07G0578800 PROTEIN-RELATED"/>
    <property type="match status" value="1"/>
</dbReference>
<dbReference type="Pfam" id="PF20431">
    <property type="entry name" value="E_motif"/>
    <property type="match status" value="1"/>
</dbReference>
<dbReference type="Pfam" id="PF01535">
    <property type="entry name" value="PPR"/>
    <property type="match status" value="5"/>
</dbReference>
<dbReference type="Pfam" id="PF13041">
    <property type="entry name" value="PPR_2"/>
    <property type="match status" value="4"/>
</dbReference>
<dbReference type="PROSITE" id="PS51375">
    <property type="entry name" value="PPR"/>
    <property type="match status" value="16"/>
</dbReference>
<protein>
    <recommendedName>
        <fullName>Putative pentatricopeptide repeat-containing protein At1g69350, mitochondrial</fullName>
    </recommendedName>
</protein>
<feature type="transit peptide" description="Mitochondrion" evidence="1">
    <location>
        <begin position="1"/>
        <end position="16"/>
    </location>
</feature>
<feature type="chain" id="PRO_0000342852" description="Putative pentatricopeptide repeat-containing protein At1g69350, mitochondrial">
    <location>
        <begin position="17"/>
        <end position="787"/>
    </location>
</feature>
<feature type="repeat" description="PPR 1">
    <location>
        <begin position="33"/>
        <end position="63"/>
    </location>
</feature>
<feature type="repeat" description="PPR 2">
    <location>
        <begin position="64"/>
        <end position="98"/>
    </location>
</feature>
<feature type="repeat" description="PPR 3">
    <location>
        <begin position="99"/>
        <end position="134"/>
    </location>
</feature>
<feature type="repeat" description="PPR 4">
    <location>
        <begin position="135"/>
        <end position="165"/>
    </location>
</feature>
<feature type="repeat" description="PPR 5">
    <location>
        <begin position="166"/>
        <end position="200"/>
    </location>
</feature>
<feature type="repeat" description="PPR 6">
    <location>
        <begin position="201"/>
        <end position="235"/>
    </location>
</feature>
<feature type="repeat" description="PPR 7">
    <location>
        <begin position="236"/>
        <end position="266"/>
    </location>
</feature>
<feature type="repeat" description="PPR 8">
    <location>
        <begin position="267"/>
        <end position="301"/>
    </location>
</feature>
<feature type="repeat" description="PPR 9">
    <location>
        <begin position="302"/>
        <end position="336"/>
    </location>
</feature>
<feature type="repeat" description="PPR 10">
    <location>
        <begin position="338"/>
        <end position="368"/>
    </location>
</feature>
<feature type="repeat" description="PPR 11">
    <location>
        <begin position="369"/>
        <end position="403"/>
    </location>
</feature>
<feature type="repeat" description="PPR 12">
    <location>
        <begin position="404"/>
        <end position="434"/>
    </location>
</feature>
<feature type="repeat" description="PPR 13">
    <location>
        <begin position="438"/>
        <end position="468"/>
    </location>
</feature>
<feature type="repeat" description="PPR 14">
    <location>
        <begin position="469"/>
        <end position="503"/>
    </location>
</feature>
<feature type="repeat" description="PPR 15">
    <location>
        <begin position="504"/>
        <end position="534"/>
    </location>
</feature>
<feature type="repeat" description="PPR 16">
    <location>
        <begin position="538"/>
        <end position="568"/>
    </location>
</feature>
<feature type="repeat" description="PPR 17">
    <location>
        <begin position="569"/>
        <end position="603"/>
    </location>
</feature>
<feature type="repeat" description="PPR 18">
    <location>
        <begin position="604"/>
        <end position="638"/>
    </location>
</feature>
<feature type="repeat" description="PPR 19">
    <location>
        <begin position="639"/>
        <end position="669"/>
    </location>
</feature>
<feature type="region of interest" description="Type E motif">
    <location>
        <begin position="674"/>
        <end position="749"/>
    </location>
</feature>
<feature type="region of interest" description="Type E(+) motif">
    <location>
        <begin position="750"/>
        <end position="780"/>
    </location>
</feature>